<proteinExistence type="inferred from homology"/>
<accession>A5CD85</accession>
<gene>
    <name evidence="1" type="primary">rsmH</name>
    <name type="synonym">mraW</name>
    <name type="ordered locus">OTBS_0702</name>
</gene>
<organism>
    <name type="scientific">Orientia tsutsugamushi (strain Boryong)</name>
    <name type="common">Rickettsia tsutsugamushi</name>
    <dbReference type="NCBI Taxonomy" id="357244"/>
    <lineage>
        <taxon>Bacteria</taxon>
        <taxon>Pseudomonadati</taxon>
        <taxon>Pseudomonadota</taxon>
        <taxon>Alphaproteobacteria</taxon>
        <taxon>Rickettsiales</taxon>
        <taxon>Rickettsiaceae</taxon>
        <taxon>Rickettsieae</taxon>
        <taxon>Orientia</taxon>
    </lineage>
</organism>
<feature type="chain" id="PRO_0000387017" description="Ribosomal RNA small subunit methyltransferase H">
    <location>
        <begin position="1"/>
        <end position="312"/>
    </location>
</feature>
<feature type="binding site" evidence="1">
    <location>
        <begin position="33"/>
        <end position="35"/>
    </location>
    <ligand>
        <name>S-adenosyl-L-methionine</name>
        <dbReference type="ChEBI" id="CHEBI:59789"/>
    </ligand>
</feature>
<feature type="binding site" evidence="1">
    <location>
        <position position="51"/>
    </location>
    <ligand>
        <name>S-adenosyl-L-methionine</name>
        <dbReference type="ChEBI" id="CHEBI:59789"/>
    </ligand>
</feature>
<feature type="binding site" evidence="1">
    <location>
        <position position="78"/>
    </location>
    <ligand>
        <name>S-adenosyl-L-methionine</name>
        <dbReference type="ChEBI" id="CHEBI:59789"/>
    </ligand>
</feature>
<feature type="binding site" evidence="1">
    <location>
        <position position="97"/>
    </location>
    <ligand>
        <name>S-adenosyl-L-methionine</name>
        <dbReference type="ChEBI" id="CHEBI:59789"/>
    </ligand>
</feature>
<feature type="binding site" evidence="1">
    <location>
        <position position="104"/>
    </location>
    <ligand>
        <name>S-adenosyl-L-methionine</name>
        <dbReference type="ChEBI" id="CHEBI:59789"/>
    </ligand>
</feature>
<dbReference type="EC" id="2.1.1.199" evidence="1"/>
<dbReference type="EMBL" id="AM494475">
    <property type="protein sequence ID" value="CAM79768.1"/>
    <property type="molecule type" value="Genomic_DNA"/>
</dbReference>
<dbReference type="RefSeq" id="WP_011944614.1">
    <property type="nucleotide sequence ID" value="NC_009488.1"/>
</dbReference>
<dbReference type="SMR" id="A5CD85"/>
<dbReference type="KEGG" id="ots:OTBS_0702"/>
<dbReference type="eggNOG" id="COG0275">
    <property type="taxonomic scope" value="Bacteria"/>
</dbReference>
<dbReference type="HOGENOM" id="CLU_038422_1_1_5"/>
<dbReference type="Proteomes" id="UP000001565">
    <property type="component" value="Chromosome"/>
</dbReference>
<dbReference type="GO" id="GO:0005737">
    <property type="term" value="C:cytoplasm"/>
    <property type="evidence" value="ECO:0007669"/>
    <property type="project" value="UniProtKB-SubCell"/>
</dbReference>
<dbReference type="GO" id="GO:0071424">
    <property type="term" value="F:rRNA (cytosine-N4-)-methyltransferase activity"/>
    <property type="evidence" value="ECO:0007669"/>
    <property type="project" value="UniProtKB-UniRule"/>
</dbReference>
<dbReference type="GO" id="GO:0070475">
    <property type="term" value="P:rRNA base methylation"/>
    <property type="evidence" value="ECO:0007669"/>
    <property type="project" value="UniProtKB-UniRule"/>
</dbReference>
<dbReference type="CDD" id="cd02440">
    <property type="entry name" value="AdoMet_MTases"/>
    <property type="match status" value="1"/>
</dbReference>
<dbReference type="Gene3D" id="1.10.150.170">
    <property type="entry name" value="Putative methyltransferase TM0872, insert domain"/>
    <property type="match status" value="1"/>
</dbReference>
<dbReference type="Gene3D" id="3.40.50.150">
    <property type="entry name" value="Vaccinia Virus protein VP39"/>
    <property type="match status" value="1"/>
</dbReference>
<dbReference type="HAMAP" id="MF_01007">
    <property type="entry name" value="16SrRNA_methyltr_H"/>
    <property type="match status" value="1"/>
</dbReference>
<dbReference type="InterPro" id="IPR002903">
    <property type="entry name" value="RsmH"/>
</dbReference>
<dbReference type="InterPro" id="IPR023397">
    <property type="entry name" value="SAM-dep_MeTrfase_MraW_recog"/>
</dbReference>
<dbReference type="InterPro" id="IPR029063">
    <property type="entry name" value="SAM-dependent_MTases_sf"/>
</dbReference>
<dbReference type="NCBIfam" id="TIGR00006">
    <property type="entry name" value="16S rRNA (cytosine(1402)-N(4))-methyltransferase RsmH"/>
    <property type="match status" value="1"/>
</dbReference>
<dbReference type="PANTHER" id="PTHR11265:SF0">
    <property type="entry name" value="12S RRNA N4-METHYLCYTIDINE METHYLTRANSFERASE"/>
    <property type="match status" value="1"/>
</dbReference>
<dbReference type="PANTHER" id="PTHR11265">
    <property type="entry name" value="S-ADENOSYL-METHYLTRANSFERASE MRAW"/>
    <property type="match status" value="1"/>
</dbReference>
<dbReference type="Pfam" id="PF01795">
    <property type="entry name" value="Methyltransf_5"/>
    <property type="match status" value="1"/>
</dbReference>
<dbReference type="PIRSF" id="PIRSF004486">
    <property type="entry name" value="MraW"/>
    <property type="match status" value="1"/>
</dbReference>
<dbReference type="SUPFAM" id="SSF81799">
    <property type="entry name" value="Putative methyltransferase TM0872, insert domain"/>
    <property type="match status" value="1"/>
</dbReference>
<dbReference type="SUPFAM" id="SSF53335">
    <property type="entry name" value="S-adenosyl-L-methionine-dependent methyltransferases"/>
    <property type="match status" value="1"/>
</dbReference>
<protein>
    <recommendedName>
        <fullName evidence="1">Ribosomal RNA small subunit methyltransferase H</fullName>
        <ecNumber evidence="1">2.1.1.199</ecNumber>
    </recommendedName>
    <alternativeName>
        <fullName evidence="1">16S rRNA m(4)C1402 methyltransferase</fullName>
    </alternativeName>
    <alternativeName>
        <fullName evidence="1">rRNA (cytosine-N(4)-)-methyltransferase RsmH</fullName>
    </alternativeName>
</protein>
<name>RSMH_ORITB</name>
<evidence type="ECO:0000255" key="1">
    <source>
        <dbReference type="HAMAP-Rule" id="MF_01007"/>
    </source>
</evidence>
<keyword id="KW-0963">Cytoplasm</keyword>
<keyword id="KW-0489">Methyltransferase</keyword>
<keyword id="KW-1185">Reference proteome</keyword>
<keyword id="KW-0698">rRNA processing</keyword>
<keyword id="KW-0949">S-adenosyl-L-methionine</keyword>
<keyword id="KW-0808">Transferase</keyword>
<sequence length="312" mass="35267">MNNIHTPVMATEMLSYLAPVDNETYLDCTFGTGGYSKLILSNCNCKIIAFDRDPAVISIASQFYQQYSNRFTFFNDNFVEANKYLSKSAKLNGIVMDLGVSSMQLDAANRGFSFRYDAELDMRMSQKGYKASELVNEASEHQLADIIYKFGEENKANKIAKHIVLAREKKPITTTLQLANIIREAVGYNNYYKKNKIDSATKTFQAIRIFINDELSAIQNFLNQSLELLAVNGRLIVVSFHALEDAIVKKFMHQNAVKKVAQSKYSTNKQLPLQNGVLHLLTKKIAVPTRTEIINNPRSRSARLRAALKINE</sequence>
<comment type="function">
    <text evidence="1">Specifically methylates the N4 position of cytidine in position 1402 (C1402) of 16S rRNA.</text>
</comment>
<comment type="catalytic activity">
    <reaction evidence="1">
        <text>cytidine(1402) in 16S rRNA + S-adenosyl-L-methionine = N(4)-methylcytidine(1402) in 16S rRNA + S-adenosyl-L-homocysteine + H(+)</text>
        <dbReference type="Rhea" id="RHEA:42928"/>
        <dbReference type="Rhea" id="RHEA-COMP:10286"/>
        <dbReference type="Rhea" id="RHEA-COMP:10287"/>
        <dbReference type="ChEBI" id="CHEBI:15378"/>
        <dbReference type="ChEBI" id="CHEBI:57856"/>
        <dbReference type="ChEBI" id="CHEBI:59789"/>
        <dbReference type="ChEBI" id="CHEBI:74506"/>
        <dbReference type="ChEBI" id="CHEBI:82748"/>
        <dbReference type="EC" id="2.1.1.199"/>
    </reaction>
</comment>
<comment type="subcellular location">
    <subcellularLocation>
        <location evidence="1">Cytoplasm</location>
    </subcellularLocation>
</comment>
<comment type="similarity">
    <text evidence="1">Belongs to the methyltransferase superfamily. RsmH family.</text>
</comment>
<reference key="1">
    <citation type="journal article" date="2007" name="Proc. Natl. Acad. Sci. U.S.A.">
        <title>The Orientia tsutsugamushi genome reveals massive proliferation of conjugative type IV secretion system and host-cell interaction genes.</title>
        <authorList>
            <person name="Cho N.-H."/>
            <person name="Kim H.-R."/>
            <person name="Lee J.-H."/>
            <person name="Kim S.-Y."/>
            <person name="Kim J."/>
            <person name="Cha S."/>
            <person name="Kim S.-Y."/>
            <person name="Darby A.C."/>
            <person name="Fuxelius H.-H."/>
            <person name="Yin J."/>
            <person name="Kim J.H."/>
            <person name="Kim J."/>
            <person name="Lee S.J."/>
            <person name="Koh Y.-S."/>
            <person name="Jang W.-J."/>
            <person name="Park K.-H."/>
            <person name="Andersson S.G.E."/>
            <person name="Choi M.-S."/>
            <person name="Kim I.-S."/>
        </authorList>
    </citation>
    <scope>NUCLEOTIDE SEQUENCE [LARGE SCALE GENOMIC DNA]</scope>
    <source>
        <strain>Boryong</strain>
    </source>
</reference>